<name>ESIP1_RAT</name>
<dbReference type="EMBL" id="BC091212">
    <property type="protein sequence ID" value="AAH91212.1"/>
    <property type="molecule type" value="mRNA"/>
</dbReference>
<dbReference type="RefSeq" id="NP_001037722.1">
    <property type="nucleotide sequence ID" value="NM_001044257.1"/>
</dbReference>
<dbReference type="SMR" id="Q5BK43"/>
<dbReference type="FunCoup" id="Q5BK43">
    <property type="interactions" value="124"/>
</dbReference>
<dbReference type="STRING" id="10116.ENSRNOP00000012632"/>
<dbReference type="PhosphoSitePlus" id="Q5BK43"/>
<dbReference type="PaxDb" id="10116-ENSRNOP00000012632"/>
<dbReference type="Ensembl" id="ENSRNOT00000012632.6">
    <property type="protein sequence ID" value="ENSRNOP00000012632.4"/>
    <property type="gene ID" value="ENSRNOG00000009471.6"/>
</dbReference>
<dbReference type="GeneID" id="498547"/>
<dbReference type="KEGG" id="rno:498547"/>
<dbReference type="UCSC" id="RGD:1563207">
    <property type="organism name" value="rat"/>
</dbReference>
<dbReference type="AGR" id="RGD:1563207"/>
<dbReference type="CTD" id="94240"/>
<dbReference type="RGD" id="1563207">
    <property type="gene designation" value="Epsti1"/>
</dbReference>
<dbReference type="eggNOG" id="ENOG502RZCM">
    <property type="taxonomic scope" value="Eukaryota"/>
</dbReference>
<dbReference type="GeneTree" id="ENSGT00390000013820"/>
<dbReference type="HOGENOM" id="CLU_058937_1_0_1"/>
<dbReference type="InParanoid" id="Q5BK43"/>
<dbReference type="OMA" id="MNSANSW"/>
<dbReference type="OrthoDB" id="10053624at2759"/>
<dbReference type="PhylomeDB" id="Q5BK43"/>
<dbReference type="TreeFam" id="TF335788"/>
<dbReference type="Reactome" id="R-RNO-9696273">
    <property type="pathway name" value="RND1 GTPase cycle"/>
</dbReference>
<dbReference type="PRO" id="PR:Q5BK43"/>
<dbReference type="Proteomes" id="UP000002494">
    <property type="component" value="Chromosome 15"/>
</dbReference>
<dbReference type="Bgee" id="ENSRNOG00000009471">
    <property type="expression patterns" value="Expressed in spleen and 19 other cell types or tissues"/>
</dbReference>
<dbReference type="GO" id="GO:0071222">
    <property type="term" value="P:cellular response to lipopolysaccharide"/>
    <property type="evidence" value="ECO:0000266"/>
    <property type="project" value="RGD"/>
</dbReference>
<dbReference type="GO" id="GO:0071346">
    <property type="term" value="P:cellular response to type II interferon"/>
    <property type="evidence" value="ECO:0000266"/>
    <property type="project" value="RGD"/>
</dbReference>
<dbReference type="GO" id="GO:0010467">
    <property type="term" value="P:gene expression"/>
    <property type="evidence" value="ECO:0000266"/>
    <property type="project" value="RGD"/>
</dbReference>
<dbReference type="GO" id="GO:0048873">
    <property type="term" value="P:homeostasis of number of cells within a tissue"/>
    <property type="evidence" value="ECO:0000266"/>
    <property type="project" value="RGD"/>
</dbReference>
<dbReference type="GO" id="GO:0006954">
    <property type="term" value="P:inflammatory response"/>
    <property type="evidence" value="ECO:0000266"/>
    <property type="project" value="RGD"/>
</dbReference>
<dbReference type="GO" id="GO:0042116">
    <property type="term" value="P:macrophage activation"/>
    <property type="evidence" value="ECO:0000266"/>
    <property type="project" value="RGD"/>
</dbReference>
<dbReference type="GO" id="GO:0030225">
    <property type="term" value="P:macrophage differentiation"/>
    <property type="evidence" value="ECO:0000266"/>
    <property type="project" value="RGD"/>
</dbReference>
<dbReference type="GO" id="GO:0008104">
    <property type="term" value="P:protein localization"/>
    <property type="evidence" value="ECO:0000266"/>
    <property type="project" value="RGD"/>
</dbReference>
<dbReference type="InterPro" id="IPR026185">
    <property type="entry name" value="EPSTI1"/>
</dbReference>
<dbReference type="PANTHER" id="PTHR22529">
    <property type="entry name" value="EPITHELIAL-STROMAL INTERACTION PROTEIN 1"/>
    <property type="match status" value="1"/>
</dbReference>
<dbReference type="PANTHER" id="PTHR22529:SF1">
    <property type="entry name" value="EPITHELIAL-STROMAL INTERACTION PROTEIN 1"/>
    <property type="match status" value="1"/>
</dbReference>
<feature type="chain" id="PRO_0000314036" description="Epithelial-stromal interaction protein 1">
    <location>
        <begin position="1"/>
        <end position="314"/>
    </location>
</feature>
<feature type="region of interest" description="Disordered" evidence="3">
    <location>
        <begin position="1"/>
        <end position="72"/>
    </location>
</feature>
<feature type="region of interest" description="Disordered" evidence="3">
    <location>
        <begin position="200"/>
        <end position="219"/>
    </location>
</feature>
<feature type="region of interest" description="Disordered" evidence="3">
    <location>
        <begin position="225"/>
        <end position="267"/>
    </location>
</feature>
<feature type="region of interest" description="Disordered" evidence="3">
    <location>
        <begin position="292"/>
        <end position="314"/>
    </location>
</feature>
<feature type="coiled-coil region" evidence="2">
    <location>
        <begin position="71"/>
        <end position="180"/>
    </location>
</feature>
<feature type="compositionally biased region" description="Basic and acidic residues" evidence="3">
    <location>
        <begin position="43"/>
        <end position="58"/>
    </location>
</feature>
<feature type="compositionally biased region" description="Basic and acidic residues" evidence="3">
    <location>
        <begin position="232"/>
        <end position="267"/>
    </location>
</feature>
<feature type="compositionally biased region" description="Polar residues" evidence="3">
    <location>
        <begin position="305"/>
        <end position="314"/>
    </location>
</feature>
<evidence type="ECO:0000250" key="1">
    <source>
        <dbReference type="UniProtKB" id="Q8VDI1"/>
    </source>
</evidence>
<evidence type="ECO:0000255" key="2"/>
<evidence type="ECO:0000256" key="3">
    <source>
        <dbReference type="SAM" id="MobiDB-lite"/>
    </source>
</evidence>
<comment type="function">
    <text evidence="1">Plays a role in M1 macrophage polarization and is required for the proper regulation of gene expression during M1 versus M2 macrophage differentiation (By similarity). Might play a role in RELA/p65 and STAT1 phosphorylation and nuclear localization upon activation of macrophages (By similarity).</text>
</comment>
<accession>Q5BK43</accession>
<organism>
    <name type="scientific">Rattus norvegicus</name>
    <name type="common">Rat</name>
    <dbReference type="NCBI Taxonomy" id="10116"/>
    <lineage>
        <taxon>Eukaryota</taxon>
        <taxon>Metazoa</taxon>
        <taxon>Chordata</taxon>
        <taxon>Craniata</taxon>
        <taxon>Vertebrata</taxon>
        <taxon>Euteleostomi</taxon>
        <taxon>Mammalia</taxon>
        <taxon>Eutheria</taxon>
        <taxon>Euarchontoglires</taxon>
        <taxon>Glires</taxon>
        <taxon>Rodentia</taxon>
        <taxon>Myomorpha</taxon>
        <taxon>Muroidea</taxon>
        <taxon>Muridae</taxon>
        <taxon>Murinae</taxon>
        <taxon>Rattus</taxon>
    </lineage>
</organism>
<protein>
    <recommendedName>
        <fullName>Epithelial-stromal interaction protein 1</fullName>
    </recommendedName>
</protein>
<proteinExistence type="evidence at transcript level"/>
<reference key="1">
    <citation type="journal article" date="2004" name="Genome Res.">
        <title>The status, quality, and expansion of the NIH full-length cDNA project: the Mammalian Gene Collection (MGC).</title>
        <authorList>
            <consortium name="The MGC Project Team"/>
        </authorList>
    </citation>
    <scope>NUCLEOTIDE SEQUENCE [LARGE SCALE MRNA]</scope>
    <source>
        <tissue>Thymus</tissue>
    </source>
</reference>
<sequence>MYPRSRVVGPGLGTSSSSRDHAGAGQHGELDLQQNQRQNLEVAEPKGPKLERQGHGDQRSTGTYTLIAPNETRRQKIQRIAEQELADLERWKQQNKAKPVHLVPQRLGGSQSEAEVRQKQQLQQMRSKYQQKLKRDEAIRIRKDAEEAELQRMKAIQREKSNKLEKKKQLQEDIRRATLREHHQSKTAELLSRLDTDRTNRSACNIAPPAAQSSRWKLPVLLRDPSRAGSQAHKDSPQKEDNQKLQKTRDGHQKNKLLETKGQHQEEERAQIHQAEHWRVNNAFLDRLQGKSQPGGVEQSGGCWNMNSTDGWGI</sequence>
<gene>
    <name type="primary">Epsti1</name>
</gene>
<keyword id="KW-0175">Coiled coil</keyword>
<keyword id="KW-1185">Reference proteome</keyword>